<sequence>MTKQPEDWLDDVPGDDIEDEDDEIIWVSKSEIKRDAEELKRLGAEIVDLGKNALDKIPLDADLRPAIELAQRIKMEGRRRQLQLIGKMLRQRDVEPIRQALDKLKNRHNQQVVLFHKLENLRDRLIDQGDDAIAEVLNLWPDADRQQLRTLIRNAKKEKEGNKPPKSARQIFQYLRELAENEG</sequence>
<reference key="1">
    <citation type="journal article" date="2006" name="BMC Genomics">
        <title>Complete genome sequence of Shigella flexneri 5b and comparison with Shigella flexneri 2a.</title>
        <authorList>
            <person name="Nie H."/>
            <person name="Yang F."/>
            <person name="Zhang X."/>
            <person name="Yang J."/>
            <person name="Chen L."/>
            <person name="Wang J."/>
            <person name="Xiong Z."/>
            <person name="Peng J."/>
            <person name="Sun L."/>
            <person name="Dong J."/>
            <person name="Xue Y."/>
            <person name="Xu X."/>
            <person name="Chen S."/>
            <person name="Yao Z."/>
            <person name="Shen Y."/>
            <person name="Jin Q."/>
        </authorList>
    </citation>
    <scope>NUCLEOTIDE SEQUENCE [LARGE SCALE GENOMIC DNA]</scope>
    <source>
        <strain>8401</strain>
    </source>
</reference>
<name>DARP_SHIF8</name>
<evidence type="ECO:0000255" key="1">
    <source>
        <dbReference type="HAMAP-Rule" id="MF_00765"/>
    </source>
</evidence>
<comment type="function">
    <text evidence="1">Member of a network of 50S ribosomal subunit biogenesis factors which assembles along the 30S-50S interface, preventing incorrect 23S rRNA structures from forming. Promotes peptidyl transferase center (PTC) maturation.</text>
</comment>
<comment type="subcellular location">
    <subcellularLocation>
        <location evidence="1">Cytoplasm</location>
    </subcellularLocation>
    <text evidence="1">Associates with late stage pre-50S ribosomal subunits.</text>
</comment>
<comment type="similarity">
    <text evidence="1">Belongs to the DarP family.</text>
</comment>
<dbReference type="EMBL" id="CP000266">
    <property type="protein sequence ID" value="ABF06239.1"/>
    <property type="molecule type" value="Genomic_DNA"/>
</dbReference>
<dbReference type="SMR" id="Q0SXH6"/>
<dbReference type="KEGG" id="sfv:SFV_4257"/>
<dbReference type="HOGENOM" id="CLU_106757_2_0_6"/>
<dbReference type="Proteomes" id="UP000000659">
    <property type="component" value="Chromosome"/>
</dbReference>
<dbReference type="GO" id="GO:0005829">
    <property type="term" value="C:cytosol"/>
    <property type="evidence" value="ECO:0007669"/>
    <property type="project" value="TreeGrafter"/>
</dbReference>
<dbReference type="GO" id="GO:0043022">
    <property type="term" value="F:ribosome binding"/>
    <property type="evidence" value="ECO:0007669"/>
    <property type="project" value="UniProtKB-UniRule"/>
</dbReference>
<dbReference type="GO" id="GO:0019843">
    <property type="term" value="F:rRNA binding"/>
    <property type="evidence" value="ECO:0007669"/>
    <property type="project" value="UniProtKB-UniRule"/>
</dbReference>
<dbReference type="GO" id="GO:1902626">
    <property type="term" value="P:assembly of large subunit precursor of preribosome"/>
    <property type="evidence" value="ECO:0007669"/>
    <property type="project" value="UniProtKB-UniRule"/>
</dbReference>
<dbReference type="CDD" id="cd16331">
    <property type="entry name" value="YjgA-like"/>
    <property type="match status" value="1"/>
</dbReference>
<dbReference type="FunFam" id="1.10.60.30:FF:000001">
    <property type="entry name" value="UPF0307 protein YjgA"/>
    <property type="match status" value="1"/>
</dbReference>
<dbReference type="FunFam" id="1.10.60.30:FF:000002">
    <property type="entry name" value="UPF0307 protein YjgA"/>
    <property type="match status" value="1"/>
</dbReference>
<dbReference type="Gene3D" id="1.10.60.30">
    <property type="entry name" value="PSPTO4464-like domains"/>
    <property type="match status" value="2"/>
</dbReference>
<dbReference type="HAMAP" id="MF_00765">
    <property type="entry name" value="DarP"/>
    <property type="match status" value="1"/>
</dbReference>
<dbReference type="InterPro" id="IPR006839">
    <property type="entry name" value="DarP"/>
</dbReference>
<dbReference type="InterPro" id="IPR023153">
    <property type="entry name" value="DarP_sf"/>
</dbReference>
<dbReference type="NCBIfam" id="NF003593">
    <property type="entry name" value="PRK05255.1-1"/>
    <property type="match status" value="1"/>
</dbReference>
<dbReference type="PANTHER" id="PTHR38101">
    <property type="entry name" value="UPF0307 PROTEIN YJGA"/>
    <property type="match status" value="1"/>
</dbReference>
<dbReference type="PANTHER" id="PTHR38101:SF1">
    <property type="entry name" value="UPF0307 PROTEIN YJGA"/>
    <property type="match status" value="1"/>
</dbReference>
<dbReference type="Pfam" id="PF04751">
    <property type="entry name" value="DarP"/>
    <property type="match status" value="1"/>
</dbReference>
<dbReference type="PIRSF" id="PIRSF016183">
    <property type="entry name" value="UCP016183"/>
    <property type="match status" value="1"/>
</dbReference>
<dbReference type="SUPFAM" id="SSF158710">
    <property type="entry name" value="PSPTO4464-like"/>
    <property type="match status" value="1"/>
</dbReference>
<organism>
    <name type="scientific">Shigella flexneri serotype 5b (strain 8401)</name>
    <dbReference type="NCBI Taxonomy" id="373384"/>
    <lineage>
        <taxon>Bacteria</taxon>
        <taxon>Pseudomonadati</taxon>
        <taxon>Pseudomonadota</taxon>
        <taxon>Gammaproteobacteria</taxon>
        <taxon>Enterobacterales</taxon>
        <taxon>Enterobacteriaceae</taxon>
        <taxon>Shigella</taxon>
    </lineage>
</organism>
<feature type="chain" id="PRO_1000046806" description="Dual-action ribosomal maturation protein DarP">
    <location>
        <begin position="1"/>
        <end position="183"/>
    </location>
</feature>
<protein>
    <recommendedName>
        <fullName evidence="1">Dual-action ribosomal maturation protein DarP</fullName>
    </recommendedName>
    <alternativeName>
        <fullName evidence="1">Large ribosomal subunit assembly factor DarP</fullName>
    </alternativeName>
</protein>
<proteinExistence type="inferred from homology"/>
<accession>Q0SXH6</accession>
<keyword id="KW-0963">Cytoplasm</keyword>
<keyword id="KW-0690">Ribosome biogenesis</keyword>
<keyword id="KW-0694">RNA-binding</keyword>
<keyword id="KW-0699">rRNA-binding</keyword>
<gene>
    <name evidence="1" type="primary">darP</name>
    <name type="ordered locus">SFV_4257</name>
</gene>